<accession>Q5RDD3</accession>
<keyword id="KW-0004">4Fe-4S</keyword>
<keyword id="KW-0007">Acetylation</keyword>
<keyword id="KW-0249">Electron transport</keyword>
<keyword id="KW-0274">FAD</keyword>
<keyword id="KW-0285">Flavoprotein</keyword>
<keyword id="KW-0408">Iron</keyword>
<keyword id="KW-0411">Iron-sulfur</keyword>
<keyword id="KW-0472">Membrane</keyword>
<keyword id="KW-0479">Metal-binding</keyword>
<keyword id="KW-0496">Mitochondrion</keyword>
<keyword id="KW-0999">Mitochondrion inner membrane</keyword>
<keyword id="KW-0560">Oxidoreductase</keyword>
<keyword id="KW-0597">Phosphoprotein</keyword>
<keyword id="KW-1185">Reference proteome</keyword>
<keyword id="KW-0809">Transit peptide</keyword>
<keyword id="KW-0813">Transport</keyword>
<keyword id="KW-0830">Ubiquinone</keyword>
<name>ETFD_PONAB</name>
<organism>
    <name type="scientific">Pongo abelii</name>
    <name type="common">Sumatran orangutan</name>
    <name type="synonym">Pongo pygmaeus abelii</name>
    <dbReference type="NCBI Taxonomy" id="9601"/>
    <lineage>
        <taxon>Eukaryota</taxon>
        <taxon>Metazoa</taxon>
        <taxon>Chordata</taxon>
        <taxon>Craniata</taxon>
        <taxon>Vertebrata</taxon>
        <taxon>Euteleostomi</taxon>
        <taxon>Mammalia</taxon>
        <taxon>Eutheria</taxon>
        <taxon>Euarchontoglires</taxon>
        <taxon>Primates</taxon>
        <taxon>Haplorrhini</taxon>
        <taxon>Catarrhini</taxon>
        <taxon>Hominidae</taxon>
        <taxon>Pongo</taxon>
    </lineage>
</organism>
<dbReference type="EC" id="1.5.5.1"/>
<dbReference type="EMBL" id="CR857981">
    <property type="protein sequence ID" value="CAH90224.1"/>
    <property type="molecule type" value="mRNA"/>
</dbReference>
<dbReference type="RefSeq" id="NP_001125091.1">
    <property type="nucleotide sequence ID" value="NM_001131619.1"/>
</dbReference>
<dbReference type="SMR" id="Q5RDD3"/>
<dbReference type="FunCoup" id="Q5RDD3">
    <property type="interactions" value="1452"/>
</dbReference>
<dbReference type="STRING" id="9601.ENSPPYP00000016941"/>
<dbReference type="GeneID" id="100171973"/>
<dbReference type="KEGG" id="pon:100171973"/>
<dbReference type="CTD" id="2110"/>
<dbReference type="eggNOG" id="KOG2415">
    <property type="taxonomic scope" value="Eukaryota"/>
</dbReference>
<dbReference type="InParanoid" id="Q5RDD3"/>
<dbReference type="OrthoDB" id="437331at2759"/>
<dbReference type="Proteomes" id="UP000001595">
    <property type="component" value="Unplaced"/>
</dbReference>
<dbReference type="GO" id="GO:0005743">
    <property type="term" value="C:mitochondrial inner membrane"/>
    <property type="evidence" value="ECO:0007669"/>
    <property type="project" value="UniProtKB-SubCell"/>
</dbReference>
<dbReference type="GO" id="GO:0051539">
    <property type="term" value="F:4 iron, 4 sulfur cluster binding"/>
    <property type="evidence" value="ECO:0007669"/>
    <property type="project" value="UniProtKB-KW"/>
</dbReference>
<dbReference type="GO" id="GO:0004174">
    <property type="term" value="F:electron-transferring-flavoprotein dehydrogenase activity"/>
    <property type="evidence" value="ECO:0007669"/>
    <property type="project" value="UniProtKB-EC"/>
</dbReference>
<dbReference type="GO" id="GO:0046872">
    <property type="term" value="F:metal ion binding"/>
    <property type="evidence" value="ECO:0007669"/>
    <property type="project" value="UniProtKB-KW"/>
</dbReference>
<dbReference type="FunFam" id="3.30.70.20:FF:000088">
    <property type="entry name" value="Electron transfer flavoprotein-ubiquinone oxidoreductase, mitochondrial"/>
    <property type="match status" value="1"/>
</dbReference>
<dbReference type="Gene3D" id="3.30.70.20">
    <property type="match status" value="1"/>
</dbReference>
<dbReference type="Gene3D" id="3.30.9.90">
    <property type="match status" value="1"/>
</dbReference>
<dbReference type="Gene3D" id="3.50.50.60">
    <property type="entry name" value="FAD/NAD(P)-binding domain"/>
    <property type="match status" value="1"/>
</dbReference>
<dbReference type="InterPro" id="IPR017896">
    <property type="entry name" value="4Fe4S_Fe-S-bd"/>
</dbReference>
<dbReference type="InterPro" id="IPR040156">
    <property type="entry name" value="ETF-QO"/>
</dbReference>
<dbReference type="InterPro" id="IPR049398">
    <property type="entry name" value="ETF-QO/FixC_UQ-bd"/>
</dbReference>
<dbReference type="InterPro" id="IPR007859">
    <property type="entry name" value="ETF-QO/FixX_C"/>
</dbReference>
<dbReference type="InterPro" id="IPR036188">
    <property type="entry name" value="FAD/NAD-bd_sf"/>
</dbReference>
<dbReference type="PANTHER" id="PTHR10617">
    <property type="entry name" value="ELECTRON TRANSFER FLAVOPROTEIN-UBIQUINONE OXIDOREDUCTASE"/>
    <property type="match status" value="1"/>
</dbReference>
<dbReference type="PANTHER" id="PTHR10617:SF107">
    <property type="entry name" value="ELECTRON TRANSFER FLAVOPROTEIN-UBIQUINONE OXIDOREDUCTASE, MITOCHONDRIAL"/>
    <property type="match status" value="1"/>
</dbReference>
<dbReference type="Pfam" id="PF21162">
    <property type="entry name" value="ETFQO_UQ-bd"/>
    <property type="match status" value="1"/>
</dbReference>
<dbReference type="Pfam" id="PF05187">
    <property type="entry name" value="Fer4_ETF_QO"/>
    <property type="match status" value="1"/>
</dbReference>
<dbReference type="Pfam" id="PF13450">
    <property type="entry name" value="NAD_binding_8"/>
    <property type="match status" value="1"/>
</dbReference>
<dbReference type="SUPFAM" id="SSF54862">
    <property type="entry name" value="4Fe-4S ferredoxins"/>
    <property type="match status" value="1"/>
</dbReference>
<dbReference type="SUPFAM" id="SSF54373">
    <property type="entry name" value="FAD-linked reductases, C-terminal domain"/>
    <property type="match status" value="1"/>
</dbReference>
<dbReference type="SUPFAM" id="SSF51905">
    <property type="entry name" value="FAD/NAD(P)-binding domain"/>
    <property type="match status" value="1"/>
</dbReference>
<dbReference type="PROSITE" id="PS51379">
    <property type="entry name" value="4FE4S_FER_2"/>
    <property type="match status" value="1"/>
</dbReference>
<feature type="transit peptide" description="Mitochondrion" evidence="4">
    <location>
        <begin position="1"/>
        <end position="33"/>
    </location>
</feature>
<feature type="chain" id="PRO_0000285847" description="Electron transfer flavoprotein-ubiquinone oxidoreductase, mitochondrial">
    <location>
        <begin position="34"/>
        <end position="617"/>
    </location>
</feature>
<feature type="intramembrane region" evidence="1">
    <location>
        <begin position="109"/>
        <end position="130"/>
    </location>
</feature>
<feature type="intramembrane region" evidence="1">
    <location>
        <begin position="428"/>
        <end position="447"/>
    </location>
</feature>
<feature type="domain" description="4Fe-4S ferredoxin-type" evidence="5">
    <location>
        <begin position="577"/>
        <end position="606"/>
    </location>
</feature>
<feature type="binding site" evidence="4">
    <location>
        <begin position="71"/>
        <end position="85"/>
    </location>
    <ligand>
        <name>FAD</name>
        <dbReference type="ChEBI" id="CHEBI:57692"/>
    </ligand>
</feature>
<feature type="binding site" evidence="1">
    <location>
        <position position="305"/>
    </location>
    <ligand>
        <name>a ubiquinone</name>
        <dbReference type="ChEBI" id="CHEBI:16389"/>
    </ligand>
</feature>
<feature type="binding site" evidence="1">
    <location>
        <position position="306"/>
    </location>
    <ligand>
        <name>a ubiquinone</name>
        <dbReference type="ChEBI" id="CHEBI:16389"/>
    </ligand>
</feature>
<feature type="binding site" evidence="4">
    <location>
        <position position="561"/>
    </location>
    <ligand>
        <name>[4Fe-4S] cluster</name>
        <dbReference type="ChEBI" id="CHEBI:49883"/>
    </ligand>
</feature>
<feature type="binding site" evidence="4">
    <location>
        <position position="586"/>
    </location>
    <ligand>
        <name>[4Fe-4S] cluster</name>
        <dbReference type="ChEBI" id="CHEBI:49883"/>
    </ligand>
</feature>
<feature type="binding site" evidence="4">
    <location>
        <position position="589"/>
    </location>
    <ligand>
        <name>[4Fe-4S] cluster</name>
        <dbReference type="ChEBI" id="CHEBI:49883"/>
    </ligand>
</feature>
<feature type="binding site" evidence="4">
    <location>
        <position position="592"/>
    </location>
    <ligand>
        <name>[4Fe-4S] cluster</name>
        <dbReference type="ChEBI" id="CHEBI:49883"/>
    </ligand>
</feature>
<feature type="modified residue" description="N6-acetyllysine" evidence="3">
    <location>
        <position position="96"/>
    </location>
</feature>
<feature type="modified residue" description="N6-acetyllysine" evidence="3">
    <location>
        <position position="132"/>
    </location>
</feature>
<feature type="modified residue" description="N6-acetyllysine" evidence="3">
    <location>
        <position position="223"/>
    </location>
</feature>
<feature type="modified residue" description="N6-acetyllysine" evidence="3">
    <location>
        <position position="357"/>
    </location>
</feature>
<feature type="modified residue" description="Phosphoserine" evidence="2">
    <location>
        <position position="551"/>
    </location>
</feature>
<sequence>MLVPLAKLSCPAYQCFHALKIKKNYLPLCATRWSSTSTVPRITTHYTIYPRDKDKRWEGVNMERFAEGADVVIVGAGPAGLSAAVRLKQLAAAHEKDIRVCLVEKAAQIGAHTLSGACLDPGAFKELFPDWKEKGAPLNTPVTEDRFGILTEKYRIPVPILPGLPMNNHGNYIVRLGHLVSWMGEQAEALGVEVYPGYAAAEVLFHDDGSVKGIATNDVGIQKDGAPKATFERGLELHAKVTIFAEGCHGHLAKQLYKKFDLRANCEPQTYGIGLKELWVIDEKNWKPGRVDHTVGWPLDRHTYGGSFLYHLNEGEPLVALGLVVGLDYQNPYLSPFREFQRWKHHPSIRPTLEGGKRIAYGARALNEGGFQSIPKLTFPGGLLIGCSPGFMNVPKIKGTHTAMKSGILAAESIFNQLTSENLQSKTMGLHVTEYEDNLKNSWVWKELYSVRNIRPSCHGVLGVYGGMIYTGIFYWILRGMEPWTLKHKGSDFERLKPAKDCTPIEYPKPDGQISFDLLSSVALSGTNHEHDQPAHLTLRDDSIPVNRNLSIYDGPEQRFCPAGVYEFVPVEQGDGFRLQINAQNCVHCKTCDIKDPSQNINWVVPEGGGGPAYNGM</sequence>
<proteinExistence type="evidence at transcript level"/>
<evidence type="ECO:0000250" key="1"/>
<evidence type="ECO:0000250" key="2">
    <source>
        <dbReference type="UniProtKB" id="Q16134"/>
    </source>
</evidence>
<evidence type="ECO:0000250" key="3">
    <source>
        <dbReference type="UniProtKB" id="Q921G7"/>
    </source>
</evidence>
<evidence type="ECO:0000255" key="4"/>
<evidence type="ECO:0000255" key="5">
    <source>
        <dbReference type="PROSITE-ProRule" id="PRU00711"/>
    </source>
</evidence>
<evidence type="ECO:0000305" key="6"/>
<protein>
    <recommendedName>
        <fullName>Electron transfer flavoprotein-ubiquinone oxidoreductase, mitochondrial</fullName>
        <shortName>ETF-QO</shortName>
        <shortName>ETF-ubiquinone oxidoreductase</shortName>
        <ecNumber>1.5.5.1</ecNumber>
    </recommendedName>
    <alternativeName>
        <fullName>Electron-transferring-flavoprotein dehydrogenase</fullName>
        <shortName>ETF dehydrogenase</shortName>
    </alternativeName>
</protein>
<gene>
    <name type="primary">ETFDH</name>
</gene>
<comment type="function">
    <text evidence="1">Accepts electrons from ETF and reduces ubiquinone.</text>
</comment>
<comment type="catalytic activity">
    <reaction>
        <text>a ubiquinone + reduced [electron-transfer flavoprotein] = a ubiquinol + oxidized [electron-transfer flavoprotein] + H(+)</text>
        <dbReference type="Rhea" id="RHEA:24052"/>
        <dbReference type="Rhea" id="RHEA-COMP:9565"/>
        <dbReference type="Rhea" id="RHEA-COMP:9566"/>
        <dbReference type="Rhea" id="RHEA-COMP:10685"/>
        <dbReference type="Rhea" id="RHEA-COMP:10686"/>
        <dbReference type="ChEBI" id="CHEBI:15378"/>
        <dbReference type="ChEBI" id="CHEBI:16389"/>
        <dbReference type="ChEBI" id="CHEBI:17976"/>
        <dbReference type="ChEBI" id="CHEBI:57692"/>
        <dbReference type="ChEBI" id="CHEBI:58307"/>
        <dbReference type="EC" id="1.5.5.1"/>
    </reaction>
</comment>
<comment type="cofactor">
    <cofactor evidence="1">
        <name>[4Fe-4S] cluster</name>
        <dbReference type="ChEBI" id="CHEBI:49883"/>
    </cofactor>
    <text evidence="1">Binds 1 [4Fe-4S] cluster.</text>
</comment>
<comment type="cofactor">
    <cofactor evidence="1">
        <name>FAD</name>
        <dbReference type="ChEBI" id="CHEBI:57692"/>
    </cofactor>
</comment>
<comment type="subunit">
    <text evidence="1">Monomer.</text>
</comment>
<comment type="subcellular location">
    <subcellularLocation>
        <location evidence="1">Mitochondrion inner membrane</location>
    </subcellularLocation>
</comment>
<comment type="similarity">
    <text evidence="6">Belongs to the ETF-QO/FixC family.</text>
</comment>
<reference key="1">
    <citation type="submission" date="2004-11" db="EMBL/GenBank/DDBJ databases">
        <authorList>
            <consortium name="The German cDNA consortium"/>
        </authorList>
    </citation>
    <scope>NUCLEOTIDE SEQUENCE [LARGE SCALE MRNA]</scope>
    <source>
        <tissue>Kidney</tissue>
    </source>
</reference>